<dbReference type="EMBL" id="MDVT01000007">
    <property type="protein sequence ID" value="OLS18178.1"/>
    <property type="molecule type" value="Genomic_DNA"/>
</dbReference>
<dbReference type="PDB" id="5ZZA">
    <property type="method" value="X-ray"/>
    <property type="resolution" value="1.53 A"/>
    <property type="chains" value="P=1-119"/>
</dbReference>
<dbReference type="PDBsum" id="5ZZA"/>
<dbReference type="SMR" id="A0A1Q9N7W7"/>
<dbReference type="GO" id="GO:0005737">
    <property type="term" value="C:cytoplasm"/>
    <property type="evidence" value="ECO:0007669"/>
    <property type="project" value="UniProtKB-KW"/>
</dbReference>
<dbReference type="GO" id="GO:0005856">
    <property type="term" value="C:cytoskeleton"/>
    <property type="evidence" value="ECO:0007669"/>
    <property type="project" value="UniProtKB-SubCell"/>
</dbReference>
<dbReference type="GO" id="GO:0003779">
    <property type="term" value="F:actin binding"/>
    <property type="evidence" value="ECO:0007669"/>
    <property type="project" value="UniProtKB-KW"/>
</dbReference>
<dbReference type="Gene3D" id="3.30.450.30">
    <property type="entry name" value="Dynein light chain 2a, cytoplasmic"/>
    <property type="match status" value="1"/>
</dbReference>
<dbReference type="InterPro" id="IPR036140">
    <property type="entry name" value="PFN_sf"/>
</dbReference>
<dbReference type="SUPFAM" id="SSF55770">
    <property type="entry name" value="Profilin (actin-binding protein)"/>
    <property type="match status" value="1"/>
</dbReference>
<keyword id="KW-0002">3D-structure</keyword>
<keyword id="KW-0009">Actin-binding</keyword>
<keyword id="KW-0963">Cytoplasm</keyword>
<keyword id="KW-0206">Cytoskeleton</keyword>
<feature type="chain" id="PRO_0000450553" description="Odin profilin">
    <location>
        <begin position="1"/>
        <end position="119"/>
    </location>
</feature>
<feature type="helix" evidence="6">
    <location>
        <begin position="3"/>
        <end position="9"/>
    </location>
</feature>
<feature type="strand" evidence="6">
    <location>
        <begin position="15"/>
        <end position="22"/>
    </location>
</feature>
<feature type="strand" evidence="6">
    <location>
        <begin position="27"/>
        <end position="30"/>
    </location>
</feature>
<feature type="helix" evidence="6">
    <location>
        <begin position="38"/>
        <end position="47"/>
    </location>
</feature>
<feature type="strand" evidence="6">
    <location>
        <begin position="50"/>
        <end position="54"/>
    </location>
</feature>
<feature type="strand" evidence="6">
    <location>
        <begin position="57"/>
        <end position="73"/>
    </location>
</feature>
<feature type="turn" evidence="6">
    <location>
        <begin position="74"/>
        <end position="77"/>
    </location>
</feature>
<feature type="strand" evidence="6">
    <location>
        <begin position="78"/>
        <end position="85"/>
    </location>
</feature>
<feature type="turn" evidence="6">
    <location>
        <begin position="86"/>
        <end position="88"/>
    </location>
</feature>
<feature type="strand" evidence="6">
    <location>
        <begin position="89"/>
        <end position="95"/>
    </location>
</feature>
<feature type="helix" evidence="6">
    <location>
        <begin position="101"/>
        <end position="116"/>
    </location>
</feature>
<protein>
    <recommendedName>
        <fullName evidence="2">Odin profilin</fullName>
    </recommendedName>
</protein>
<comment type="function">
    <text evidence="1">Binds to actin and affects the structure of the cytoskeleton. At high concentrations inhibits spontaneous rabbit actin nucleation. This strongly suggests this archaea has a profilin-regulated actin system, and actin-type genes can be identified in this organism.</text>
</comment>
<comment type="activity regulation">
    <text evidence="4">Inhibition of rabbit actin polymerization is reduced by phosphatidylinositol-(4,5)-P2(1,2-dipalmitoyl), a soluble form of the phospholipid phosphatidylinositol, suggesting an unknown lipid might regulate actin-profilin interaction in vivo.</text>
</comment>
<comment type="subcellular location">
    <subcellularLocation>
        <location evidence="4">Cytoplasm</location>
        <location evidence="4">Cytoskeleton</location>
    </subcellularLocation>
</comment>
<comment type="similarity">
    <text evidence="3">Belongs to the Asgard profilin family.</text>
</comment>
<proteinExistence type="evidence at protein level"/>
<gene>
    <name type="ORF">OdinLCB4_14170</name>
</gene>
<sequence length="119" mass="12648">MSLEQLAGRLISGDIGATAVIKMTGEIIYQSPNWSVDGVHAINVYKNREPSIIIQGVKYSVIDVNEDRLIATNVGGQGHIVGAVAGGKALLIGYVSPNGDARTAYIQIDKTARQLSKIL</sequence>
<accession>A0A1Q9N7W7</accession>
<name>PROF_ODILC</name>
<reference key="1">
    <citation type="journal article" date="2017" name="Nature">
        <title>Asgard archaea illuminate the origin of eukaryotic cellular complexity.</title>
        <authorList>
            <person name="Zaremba-Niedzwiedzka K."/>
            <person name="Caceres E.F."/>
            <person name="Saw J.H."/>
            <person name="Backstrom D."/>
            <person name="Juzokaite L."/>
            <person name="Vancaester E."/>
            <person name="Seitz K.W."/>
            <person name="Anantharaman K."/>
            <person name="Starnawski P."/>
            <person name="Kjeldsen K.U."/>
            <person name="Stott M.B."/>
            <person name="Nunoura T."/>
            <person name="Banfield J.F."/>
            <person name="Schramm A."/>
            <person name="Baker B.J."/>
            <person name="Spang A."/>
            <person name="Ettema T.J.G."/>
        </authorList>
    </citation>
    <scope>NUCLEOTIDE SEQUENCE [LARGE SCALE GENOMIC DNA]</scope>
    <source>
        <strain>LCB_4</strain>
    </source>
</reference>
<reference evidence="5" key="2">
    <citation type="journal article" date="2018" name="Nature">
        <title>Genomes of Asgard archaea encode profilins that regulate actin.</title>
        <authorList>
            <person name="Akil C."/>
            <person name="Robinson R.C."/>
        </authorList>
    </citation>
    <scope>X-RAY CRYSTALLOGRAPHY (1.53 ANGSTROMS) IN COMPLEX WITH RABBIT ACTIN</scope>
    <scope>FUNCTION</scope>
    <scope>ACTIVITY REGULATION</scope>
    <scope>SUBCELLULAR LOCATION</scope>
</reference>
<evidence type="ECO:0000269" key="1">
    <source>
    </source>
</evidence>
<evidence type="ECO:0000303" key="2">
    <source>
    </source>
</evidence>
<evidence type="ECO:0000305" key="3"/>
<evidence type="ECO:0000305" key="4">
    <source>
    </source>
</evidence>
<evidence type="ECO:0007744" key="5">
    <source>
        <dbReference type="PDB" id="5ZZA"/>
    </source>
</evidence>
<evidence type="ECO:0007829" key="6">
    <source>
        <dbReference type="PDB" id="5ZZA"/>
    </source>
</evidence>
<organism>
    <name type="scientific">Odinarchaeota yellowstonii (strain LCB_4)</name>
    <dbReference type="NCBI Taxonomy" id="1841599"/>
    <lineage>
        <taxon>Archaea</taxon>
        <taxon>Promethearchaeati</taxon>
        <taxon>Candidatus Odinarchaeota</taxon>
        <taxon>Candidatus Odinarchaeia</taxon>
        <taxon>Candidatus Odinarchaeales</taxon>
        <taxon>Candidatus Odinarchaeaceae</taxon>
        <taxon>Candidatus Odinarchaeum</taxon>
    </lineage>
</organism>